<keyword id="KW-0167">Capsid protein</keyword>
<keyword id="KW-0238">DNA-binding</keyword>
<keyword id="KW-1048">Host nucleus</keyword>
<keyword id="KW-0945">Host-virus interaction</keyword>
<keyword id="KW-0479">Metal-binding</keyword>
<keyword id="KW-1185">Reference proteome</keyword>
<keyword id="KW-1140">T=1 icosahedral capsid protein</keyword>
<keyword id="KW-1163">Viral penetration into host nucleus</keyword>
<keyword id="KW-0946">Virion</keyword>
<keyword id="KW-1160">Virus entry into host cell</keyword>
<keyword id="KW-0862">Zinc</keyword>
<keyword id="KW-0863">Zinc-finger</keyword>
<dbReference type="EMBL" id="M10070">
    <property type="protein sequence ID" value="AAA46319.1"/>
    <property type="status" value="ALT_FRAME"/>
    <property type="molecule type" value="Genomic_DNA"/>
</dbReference>
<dbReference type="SMR" id="P0CK33"/>
<dbReference type="Proteomes" id="UP000006572">
    <property type="component" value="Genome"/>
</dbReference>
<dbReference type="GO" id="GO:0043657">
    <property type="term" value="C:host cell"/>
    <property type="evidence" value="ECO:0007669"/>
    <property type="project" value="GOC"/>
</dbReference>
<dbReference type="GO" id="GO:0042025">
    <property type="term" value="C:host cell nucleus"/>
    <property type="evidence" value="ECO:0007669"/>
    <property type="project" value="UniProtKB-SubCell"/>
</dbReference>
<dbReference type="GO" id="GO:0039615">
    <property type="term" value="C:T=1 icosahedral viral capsid"/>
    <property type="evidence" value="ECO:0007669"/>
    <property type="project" value="UniProtKB-KW"/>
</dbReference>
<dbReference type="GO" id="GO:0003677">
    <property type="term" value="F:DNA binding"/>
    <property type="evidence" value="ECO:0007669"/>
    <property type="project" value="UniProtKB-KW"/>
</dbReference>
<dbReference type="GO" id="GO:0005198">
    <property type="term" value="F:structural molecule activity"/>
    <property type="evidence" value="ECO:0007669"/>
    <property type="project" value="InterPro"/>
</dbReference>
<dbReference type="GO" id="GO:0008270">
    <property type="term" value="F:zinc ion binding"/>
    <property type="evidence" value="ECO:0007669"/>
    <property type="project" value="UniProtKB-KW"/>
</dbReference>
<dbReference type="GO" id="GO:0046718">
    <property type="term" value="P:symbiont entry into host cell"/>
    <property type="evidence" value="ECO:0007669"/>
    <property type="project" value="UniProtKB-KW"/>
</dbReference>
<dbReference type="GO" id="GO:0075732">
    <property type="term" value="P:viral penetration into host nucleus"/>
    <property type="evidence" value="ECO:0007669"/>
    <property type="project" value="UniProtKB-KW"/>
</dbReference>
<dbReference type="Gene3D" id="2.60.120.20">
    <property type="match status" value="1"/>
</dbReference>
<dbReference type="InterPro" id="IPR000650">
    <property type="entry name" value="Gem_coat_AR1"/>
</dbReference>
<dbReference type="InterPro" id="IPR000263">
    <property type="entry name" value="GV_A/BR1_coat"/>
</dbReference>
<dbReference type="InterPro" id="IPR029053">
    <property type="entry name" value="Viral_coat"/>
</dbReference>
<dbReference type="Pfam" id="PF00844">
    <property type="entry name" value="Gemini_coat"/>
    <property type="match status" value="1"/>
</dbReference>
<dbReference type="PRINTS" id="PR00224">
    <property type="entry name" value="GEMCOATAR1"/>
</dbReference>
<dbReference type="PRINTS" id="PR00223">
    <property type="entry name" value="GEMCOATARBR1"/>
</dbReference>
<gene>
    <name type="ORF">AR1</name>
    <name type="ORF">AV1</name>
</gene>
<sequence length="250" mass="28834">MPKRDAPWLMAGTSKVSRSGNYSPSGGMGSKSNKANAWVNRPMYRKPRIYRMYKSPDVPKGCEGPCKVQSYEQRHDISHVGKVMCISDITRGNGITHRVGKRFCVKSVYILGKIWMDENIMLKNHTNSVIFWLVRDRRPYGTPMDFGQVFNMFDNEPSTATVKNDFRDRYQVMHRFNAKVSGGQYASNDQALVRRFWKVNNHVVYNHQEAGKYENHTENALLLYMACTHASNPVYATLKIRIYVYDSITN</sequence>
<organism>
    <name type="scientific">Bean golden yellow mosaic virus (isolate Puerto Rico)</name>
    <name type="common">BGYMV</name>
    <name type="synonym">Bean golden mosaic virus (isolate Puerto Rico)</name>
    <dbReference type="NCBI Taxonomy" id="222448"/>
    <lineage>
        <taxon>Viruses</taxon>
        <taxon>Monodnaviria</taxon>
        <taxon>Shotokuvirae</taxon>
        <taxon>Cressdnaviricota</taxon>
        <taxon>Repensiviricetes</taxon>
        <taxon>Geplafuvirales</taxon>
        <taxon>Geminiviridae</taxon>
        <taxon>Begomovirus</taxon>
        <taxon>Bean golden yellow mosaic virus</taxon>
    </lineage>
</organism>
<organismHost>
    <name type="scientific">Macroptilium lathyroides</name>
    <dbReference type="NCBI Taxonomy" id="260885"/>
</organismHost>
<organismHost>
    <name type="scientific">Malvastrum coromandelianum</name>
    <dbReference type="NCBI Taxonomy" id="108453"/>
</organismHost>
<organismHost>
    <name type="scientific">Phaseolus lunatus</name>
    <name type="common">Lima bean</name>
    <name type="synonym">Phaseolus limensis</name>
    <dbReference type="NCBI Taxonomy" id="3884"/>
</organismHost>
<organismHost>
    <name type="scientific">Phaseolus vulgaris</name>
    <name type="common">Kidney bean</name>
    <name type="synonym">French bean</name>
    <dbReference type="NCBI Taxonomy" id="3885"/>
</organismHost>
<comment type="function">
    <text>Encapsidates the viral DNA into characteristic twinned ('geminate') particles. Binds the genomic viral ssDNA and shuttles it into and out of the cell nucleus. The CP of bipartite geminiviruses is not required for cell-to-cell or systemic movement.</text>
</comment>
<comment type="subunit">
    <text evidence="1">Homomultimer. Binds to single-stranded and double-stranded viral DNA. Interacts (via nuclear localization signals) with host importin alpha-1a (By similarity).</text>
</comment>
<comment type="subcellular location">
    <subcellularLocation>
        <location evidence="4">Virion</location>
    </subcellularLocation>
    <subcellularLocation>
        <location evidence="1">Host nucleus</location>
    </subcellularLocation>
    <text evidence="1">It is actively transported into the host cell nucleus. It may be exported out of the nucleus through a nuclear export signal for cell-to-cell movement and spread (By similarity).</text>
</comment>
<comment type="similarity">
    <text evidence="4">Belongs to the geminiviridae capsid protein family.</text>
</comment>
<comment type="sequence caution" evidence="4">
    <conflict type="frameshift">
        <sequence resource="EMBL-CDS" id="AAA46319"/>
    </conflict>
</comment>
<proteinExistence type="inferred from homology"/>
<protein>
    <recommendedName>
        <fullName>Capsid protein</fullName>
    </recommendedName>
    <alternativeName>
        <fullName>Coat protein</fullName>
        <shortName>CP</shortName>
    </alternativeName>
</protein>
<evidence type="ECO:0000250" key="1"/>
<evidence type="ECO:0000255" key="2"/>
<evidence type="ECO:0000256" key="3">
    <source>
        <dbReference type="SAM" id="MobiDB-lite"/>
    </source>
</evidence>
<evidence type="ECO:0000305" key="4"/>
<reference key="1">
    <citation type="journal article" date="1985" name="Proc. Natl. Acad. Sci. U.S.A.">
        <title>Nucleotide sequence of bean golden mosaic virus and a model for gene regulation in geminiviruses.</title>
        <authorList>
            <person name="Howarth A.J."/>
            <person name="Caton J."/>
            <person name="Bossert M."/>
            <person name="Goodman R.M."/>
        </authorList>
    </citation>
    <scope>NUCLEOTIDE SEQUENCE [GENOMIC DNA]</scope>
</reference>
<name>CAPSD_BGYMV</name>
<feature type="chain" id="PRO_0000222179" description="Capsid protein">
    <location>
        <begin position="1"/>
        <end position="250"/>
    </location>
</feature>
<feature type="zinc finger region" evidence="2">
    <location>
        <begin position="53"/>
        <end position="70"/>
    </location>
</feature>
<feature type="region of interest" description="Disordered" evidence="3">
    <location>
        <begin position="1"/>
        <end position="31"/>
    </location>
</feature>
<feature type="short sequence motif" description="Bipartite nuclear localization signal">
    <location>
        <begin position="3"/>
        <end position="19"/>
    </location>
</feature>
<feature type="short sequence motif" description="Nuclear localization signal" evidence="2">
    <location>
        <begin position="34"/>
        <end position="48"/>
    </location>
</feature>
<feature type="short sequence motif" description="Nuclear export signal" evidence="2">
    <location>
        <begin position="95"/>
        <end position="116"/>
    </location>
</feature>
<feature type="short sequence motif" description="Bipartite nuclear localization signal" evidence="2">
    <location>
        <begin position="194"/>
        <end position="241"/>
    </location>
</feature>
<feature type="compositionally biased region" description="Polar residues" evidence="3">
    <location>
        <begin position="14"/>
        <end position="31"/>
    </location>
</feature>
<accession>P0CK33</accession>
<accession>P05152</accession>
<accession>Q67579</accession>